<feature type="chain" id="PRO_0000105243" description="Indoleacetamide hydrolase">
    <location>
        <begin position="1"/>
        <end position="467"/>
    </location>
</feature>
<feature type="active site" description="Charge relay system" evidence="1">
    <location>
        <position position="74"/>
    </location>
</feature>
<feature type="active site" description="Charge relay system" evidence="1">
    <location>
        <position position="149"/>
    </location>
</feature>
<feature type="active site" description="Acyl-ester intermediate" evidence="1">
    <location>
        <position position="173"/>
    </location>
</feature>
<comment type="function">
    <text evidence="1">Hydrolyzes indole-3-acetamide (IAM) into indole-3-acetic acid (IAA).</text>
</comment>
<comment type="pathway">
    <text>Plant hormone metabolism; auxin biosynthesis.</text>
</comment>
<comment type="similarity">
    <text evidence="2">Belongs to the amidase family.</text>
</comment>
<proteinExistence type="inferred from homology"/>
<evidence type="ECO:0000250" key="1"/>
<evidence type="ECO:0000305" key="2"/>
<gene>
    <name type="primary">tms2</name>
    <name type="synonym">iaaH</name>
</gene>
<geneLocation type="plasmid">
    <name>pTi15955</name>
</geneLocation>
<organism>
    <name type="scientific">Agrobacterium tumefaciens (strain 15955)</name>
    <dbReference type="NCBI Taxonomy" id="190386"/>
    <lineage>
        <taxon>Bacteria</taxon>
        <taxon>Pseudomonadati</taxon>
        <taxon>Pseudomonadota</taxon>
        <taxon>Alphaproteobacteria</taxon>
        <taxon>Hyphomicrobiales</taxon>
        <taxon>Rhizobiaceae</taxon>
        <taxon>Rhizobium/Agrobacterium group</taxon>
        <taxon>Agrobacterium</taxon>
        <taxon>Agrobacterium tumefaciens complex</taxon>
    </lineage>
</organism>
<reference key="1">
    <citation type="journal article" date="1983" name="Plant Mol. Biol.">
        <title>Nucleotide sequence of the T-DNA region from the Agrobacterium tumefaciens octopine Ti plasmid pTi15955.</title>
        <authorList>
            <person name="Barker R.F."/>
            <person name="Idler K.B."/>
            <person name="Thompson D.V."/>
            <person name="Kemp J.D."/>
        </authorList>
        <dbReference type="AGRICOLA" id="IND84096335"/>
    </citation>
    <scope>NUCLEOTIDE SEQUENCE [GENOMIC DNA]</scope>
</reference>
<name>HYIN_AGRT9</name>
<accession>P0A2X2</accession>
<accession>P03868</accession>
<protein>
    <recommendedName>
        <fullName>Indoleacetamide hydrolase</fullName>
        <shortName>IAH</shortName>
        <ecNumber>3.5.1.-</ecNumber>
    </recommendedName>
    <alternativeName>
        <fullName>Indole-3-acetamide hydrolase</fullName>
    </alternativeName>
</protein>
<keyword id="KW-0073">Auxin biosynthesis</keyword>
<keyword id="KW-0192">Crown gall tumor</keyword>
<keyword id="KW-0378">Hydrolase</keyword>
<keyword id="KW-0614">Plasmid</keyword>
<dbReference type="EC" id="3.5.1.-"/>
<dbReference type="EMBL" id="X00493">
    <property type="protein sequence ID" value="CAA25166.1"/>
    <property type="molecule type" value="Genomic_DNA"/>
</dbReference>
<dbReference type="PIR" id="A04501">
    <property type="entry name" value="Q2AGAT"/>
</dbReference>
<dbReference type="RefSeq" id="NP_059675.1">
    <property type="nucleotide sequence ID" value="NC_002377.1"/>
</dbReference>
<dbReference type="SMR" id="P0A2X2"/>
<dbReference type="UniPathway" id="UPA00151"/>
<dbReference type="GO" id="GO:0016787">
    <property type="term" value="F:hydrolase activity"/>
    <property type="evidence" value="ECO:0007669"/>
    <property type="project" value="UniProtKB-KW"/>
</dbReference>
<dbReference type="GO" id="GO:0009851">
    <property type="term" value="P:auxin biosynthetic process"/>
    <property type="evidence" value="ECO:0007669"/>
    <property type="project" value="UniProtKB-UniPathway"/>
</dbReference>
<dbReference type="Gene3D" id="3.90.1300.10">
    <property type="entry name" value="Amidase signature (AS) domain"/>
    <property type="match status" value="1"/>
</dbReference>
<dbReference type="InterPro" id="IPR000120">
    <property type="entry name" value="Amidase"/>
</dbReference>
<dbReference type="InterPro" id="IPR020556">
    <property type="entry name" value="Amidase_CS"/>
</dbReference>
<dbReference type="InterPro" id="IPR023631">
    <property type="entry name" value="Amidase_dom"/>
</dbReference>
<dbReference type="InterPro" id="IPR036928">
    <property type="entry name" value="AS_sf"/>
</dbReference>
<dbReference type="NCBIfam" id="NF005688">
    <property type="entry name" value="PRK07488.1"/>
    <property type="match status" value="1"/>
</dbReference>
<dbReference type="PANTHER" id="PTHR11895:SF151">
    <property type="entry name" value="GLUTAMYL-TRNA(GLN) AMIDOTRANSFERASE SUBUNIT A"/>
    <property type="match status" value="1"/>
</dbReference>
<dbReference type="PANTHER" id="PTHR11895">
    <property type="entry name" value="TRANSAMIDASE"/>
    <property type="match status" value="1"/>
</dbReference>
<dbReference type="Pfam" id="PF01425">
    <property type="entry name" value="Amidase"/>
    <property type="match status" value="1"/>
</dbReference>
<dbReference type="SUPFAM" id="SSF75304">
    <property type="entry name" value="Amidase signature (AS) enzymes"/>
    <property type="match status" value="1"/>
</dbReference>
<dbReference type="PROSITE" id="PS00571">
    <property type="entry name" value="AMIDASES"/>
    <property type="match status" value="1"/>
</dbReference>
<sequence>MVAITSLAQSLEHLKRKDYSCLELVETLIARCEAAKSLNALLATDWDGLRRSAKKIDRHGNAGVGLCGIPLCFKANIATGVFPTSAATPALINHLPKIPSRVAERLFSAGALPGASGNMHELSFGITSNNYATGAVRNPWNPDLIPGGSSGGVAAAVASRLMLGGIGTDTGASVRLPAALCGVVGFRPTLGRYPGDRIIPVSPTRDTPGIIAQCVADVVILDRIISGTPERIPPVPLKGLRIGLPTTYFYDDLDADVALAAETTIRLLANKGVTFVEANIPHLDELNKGASFPVALYEFPHALKQYLDDFVKTVSFSDVIKGIRSPDVANIANAQIDGHQISKAEYELARHSFRPRLQATYRNYFKLNRLDAILFPTAPLVARPIGQDSSVIHNGTMLDTFKIYVRNVDPSSNAGLPGLSIPVCLTPDRLPVGMEIDGLADSDQRLLAIGGALEEAIGFRYFAGLPN</sequence>